<organism>
    <name type="scientific">Piper cenocladum</name>
    <name type="common">Ant piper</name>
    <dbReference type="NCBI Taxonomy" id="398741"/>
    <lineage>
        <taxon>Eukaryota</taxon>
        <taxon>Viridiplantae</taxon>
        <taxon>Streptophyta</taxon>
        <taxon>Embryophyta</taxon>
        <taxon>Tracheophyta</taxon>
        <taxon>Spermatophyta</taxon>
        <taxon>Magnoliopsida</taxon>
        <taxon>Magnoliidae</taxon>
        <taxon>Piperales</taxon>
        <taxon>Piperaceae</taxon>
        <taxon>Piper</taxon>
    </lineage>
</organism>
<accession>Q06GM6</accession>
<sequence>MKIRASARKICEKCRLIRRRGRILVICSNPRHKQRQG</sequence>
<reference key="1">
    <citation type="journal article" date="2006" name="BMC Evol. Biol.">
        <title>Complete plastid genome sequences of Drimys, Liriodendron, and Piper: implications for the phylogenetic relationships of magnoliids.</title>
        <authorList>
            <person name="Cai Z."/>
            <person name="Penaflor C."/>
            <person name="Kuehl J.V."/>
            <person name="Leebens-Mack J."/>
            <person name="Carlson J.E."/>
            <person name="dePamphilis C.W."/>
            <person name="Boore J.L."/>
            <person name="Jansen R.K."/>
        </authorList>
    </citation>
    <scope>NUCLEOTIDE SEQUENCE [LARGE SCALE GENOMIC DNA]</scope>
</reference>
<gene>
    <name evidence="1" type="primary">rpl36</name>
</gene>
<keyword id="KW-0150">Chloroplast</keyword>
<keyword id="KW-0934">Plastid</keyword>
<keyword id="KW-0687">Ribonucleoprotein</keyword>
<keyword id="KW-0689">Ribosomal protein</keyword>
<dbReference type="EMBL" id="DQ887677">
    <property type="protein sequence ID" value="ABI14505.1"/>
    <property type="molecule type" value="Genomic_DNA"/>
</dbReference>
<dbReference type="RefSeq" id="YP_784507.1">
    <property type="nucleotide sequence ID" value="NC_008457.1"/>
</dbReference>
<dbReference type="SMR" id="Q06GM6"/>
<dbReference type="GeneID" id="4363652"/>
<dbReference type="GO" id="GO:0009507">
    <property type="term" value="C:chloroplast"/>
    <property type="evidence" value="ECO:0007669"/>
    <property type="project" value="UniProtKB-SubCell"/>
</dbReference>
<dbReference type="GO" id="GO:1990904">
    <property type="term" value="C:ribonucleoprotein complex"/>
    <property type="evidence" value="ECO:0007669"/>
    <property type="project" value="UniProtKB-KW"/>
</dbReference>
<dbReference type="GO" id="GO:0005840">
    <property type="term" value="C:ribosome"/>
    <property type="evidence" value="ECO:0007669"/>
    <property type="project" value="UniProtKB-KW"/>
</dbReference>
<dbReference type="GO" id="GO:0003735">
    <property type="term" value="F:structural constituent of ribosome"/>
    <property type="evidence" value="ECO:0007669"/>
    <property type="project" value="InterPro"/>
</dbReference>
<dbReference type="GO" id="GO:0006412">
    <property type="term" value="P:translation"/>
    <property type="evidence" value="ECO:0007669"/>
    <property type="project" value="UniProtKB-UniRule"/>
</dbReference>
<dbReference type="HAMAP" id="MF_00251">
    <property type="entry name" value="Ribosomal_bL36"/>
    <property type="match status" value="1"/>
</dbReference>
<dbReference type="InterPro" id="IPR000473">
    <property type="entry name" value="Ribosomal_bL36"/>
</dbReference>
<dbReference type="InterPro" id="IPR035977">
    <property type="entry name" value="Ribosomal_bL36_sp"/>
</dbReference>
<dbReference type="NCBIfam" id="TIGR01022">
    <property type="entry name" value="rpmJ_bact"/>
    <property type="match status" value="1"/>
</dbReference>
<dbReference type="PANTHER" id="PTHR42888">
    <property type="entry name" value="50S RIBOSOMAL PROTEIN L36, CHLOROPLASTIC"/>
    <property type="match status" value="1"/>
</dbReference>
<dbReference type="PANTHER" id="PTHR42888:SF1">
    <property type="entry name" value="LARGE RIBOSOMAL SUBUNIT PROTEIN BL36C"/>
    <property type="match status" value="1"/>
</dbReference>
<dbReference type="Pfam" id="PF00444">
    <property type="entry name" value="Ribosomal_L36"/>
    <property type="match status" value="1"/>
</dbReference>
<dbReference type="SUPFAM" id="SSF57840">
    <property type="entry name" value="Ribosomal protein L36"/>
    <property type="match status" value="1"/>
</dbReference>
<dbReference type="PROSITE" id="PS00828">
    <property type="entry name" value="RIBOSOMAL_L36"/>
    <property type="match status" value="1"/>
</dbReference>
<name>RK36_PIPCE</name>
<comment type="subcellular location">
    <subcellularLocation>
        <location>Plastid</location>
        <location>Chloroplast</location>
    </subcellularLocation>
</comment>
<comment type="similarity">
    <text evidence="1">Belongs to the bacterial ribosomal protein bL36 family.</text>
</comment>
<evidence type="ECO:0000255" key="1">
    <source>
        <dbReference type="HAMAP-Rule" id="MF_00251"/>
    </source>
</evidence>
<evidence type="ECO:0000305" key="2"/>
<feature type="chain" id="PRO_0000276830" description="Large ribosomal subunit protein bL36c">
    <location>
        <begin position="1"/>
        <end position="37"/>
    </location>
</feature>
<geneLocation type="chloroplast"/>
<protein>
    <recommendedName>
        <fullName evidence="1">Large ribosomal subunit protein bL36c</fullName>
    </recommendedName>
    <alternativeName>
        <fullName evidence="2">50S ribosomal protein L36, chloroplastic</fullName>
    </alternativeName>
</protein>
<proteinExistence type="inferred from homology"/>